<accession>Q66H56</accession>
<name>TTI2_RAT</name>
<organism>
    <name type="scientific">Rattus norvegicus</name>
    <name type="common">Rat</name>
    <dbReference type="NCBI Taxonomy" id="10116"/>
    <lineage>
        <taxon>Eukaryota</taxon>
        <taxon>Metazoa</taxon>
        <taxon>Chordata</taxon>
        <taxon>Craniata</taxon>
        <taxon>Vertebrata</taxon>
        <taxon>Euteleostomi</taxon>
        <taxon>Mammalia</taxon>
        <taxon>Eutheria</taxon>
        <taxon>Euarchontoglires</taxon>
        <taxon>Glires</taxon>
        <taxon>Rodentia</taxon>
        <taxon>Myomorpha</taxon>
        <taxon>Muroidea</taxon>
        <taxon>Muridae</taxon>
        <taxon>Murinae</taxon>
        <taxon>Rattus</taxon>
    </lineage>
</organism>
<evidence type="ECO:0000250" key="1"/>
<evidence type="ECO:0000250" key="2">
    <source>
        <dbReference type="UniProtKB" id="Q6NXR4"/>
    </source>
</evidence>
<evidence type="ECO:0000256" key="3">
    <source>
        <dbReference type="SAM" id="MobiDB-lite"/>
    </source>
</evidence>
<evidence type="ECO:0000305" key="4"/>
<protein>
    <recommendedName>
        <fullName>TELO2-interacting protein 2</fullName>
    </recommendedName>
</protein>
<gene>
    <name type="primary">Tti2</name>
</gene>
<proteinExistence type="evidence at transcript level"/>
<keyword id="KW-1185">Reference proteome</keyword>
<reference key="1">
    <citation type="journal article" date="2004" name="Genome Res.">
        <title>The status, quality, and expansion of the NIH full-length cDNA project: the Mammalian Gene Collection (MGC).</title>
        <authorList>
            <consortium name="The MGC Project Team"/>
        </authorList>
    </citation>
    <scope>NUCLEOTIDE SEQUENCE [LARGE SCALE MRNA]</scope>
    <source>
        <tissue>Testis</tissue>
    </source>
</reference>
<sequence>MKLGSTEEKSGGGCSLPTEVSPPALQQAFSKILHGLSRQESSGQGNAGNAALRDLGALIEATECDKLFEGTGGGGSPREMPEILGQVAKALEKFAAPKEKADGSEEHPEVPEKATEVGLLFLKLLGKVETAKSSPVCPAWKTGLRHLSGPTYIFAITHRLKQPWTSPKSQHVAGEVLSLLFRVTECSSVAEFLCGENKDDRGRFAVVLGLLKPHLNKETWKKNPAVKHVFSWTLQQVTQPWLSQHLEKILPPSLLISDDYQTDNKVLGVQCLHHIVINVPAADLLQYNRAQVLYHALFNHLYMPEHRLIQAVLLCLLDLFPVLEKALHWQGEAARASTHCHEVLQLVLTHMESEHRLLLRRTYARNLPAFVKKLGILTARHLKRLEQVILGYLEVYDEPEDESRLKILETLKLVMQYTWPRIPCRVVVLLKALLKLICDIARDTIPTTEAAKSAVLQEATDCLILLDHCSQGQVKGLLANIALSCDDSTVVSCIRKVQGSAEAPGEDPGDD</sequence>
<feature type="chain" id="PRO_0000279416" description="TELO2-interacting protein 2">
    <location>
        <begin position="1"/>
        <end position="511"/>
    </location>
</feature>
<feature type="region of interest" description="Disordered" evidence="3">
    <location>
        <begin position="1"/>
        <end position="21"/>
    </location>
</feature>
<feature type="compositionally biased region" description="Basic and acidic residues" evidence="3">
    <location>
        <begin position="1"/>
        <end position="10"/>
    </location>
</feature>
<comment type="function">
    <text evidence="1">Regulator of the DNA damage response (DDR). Part of the TTT complex that is required to stabilize protein levels of the phosphatidylinositol 3-kinase-related protein kinase (PIKK) family proteins. The TTT complex is involved in the cellular resistance to DNA damage stresses, like ionizing radiation (IR), ultraviolet (UV) and mitomycin C (MMC). Together with the TTT complex and HSP90 may participate in the proper folding of newly synthesized PIKKs (By similarity).</text>
</comment>
<comment type="subunit">
    <text evidence="2">Component of the TTT complex composed of TELO2, TTI1 and TTI2. Interacts with TELO2 and TTI1. Interacts with WAC; WAC positively regulates MTOR activity by promoting the assembly of the TTT complex and the RUVBL complex composed of RUVBL1 and RUVBL2 into the TTT-RUVBL complex which leads to the dimerization of the mTORC1 complex and its subsequent activation.</text>
</comment>
<comment type="similarity">
    <text evidence="4">Belongs to the TTI2 family.</text>
</comment>
<dbReference type="EMBL" id="BC082008">
    <property type="protein sequence ID" value="AAH82008.1"/>
    <property type="molecule type" value="mRNA"/>
</dbReference>
<dbReference type="RefSeq" id="NP_001013905.1">
    <property type="nucleotide sequence ID" value="NM_001013883.1"/>
</dbReference>
<dbReference type="SMR" id="Q66H56"/>
<dbReference type="FunCoup" id="Q66H56">
    <property type="interactions" value="3409"/>
</dbReference>
<dbReference type="STRING" id="10116.ENSRNOP00000028965"/>
<dbReference type="PhosphoSitePlus" id="Q66H56"/>
<dbReference type="jPOST" id="Q66H56"/>
<dbReference type="PaxDb" id="10116-ENSRNOP00000028965"/>
<dbReference type="Ensembl" id="ENSRNOT00000032467.5">
    <property type="protein sequence ID" value="ENSRNOP00000028965.3"/>
    <property type="gene ID" value="ENSRNOG00000023494.6"/>
</dbReference>
<dbReference type="GeneID" id="290811"/>
<dbReference type="KEGG" id="rno:290811"/>
<dbReference type="UCSC" id="RGD:1310414">
    <property type="organism name" value="rat"/>
</dbReference>
<dbReference type="AGR" id="RGD:1310414"/>
<dbReference type="CTD" id="80185"/>
<dbReference type="RGD" id="1310414">
    <property type="gene designation" value="Tti2"/>
</dbReference>
<dbReference type="eggNOG" id="ENOG502QVMM">
    <property type="taxonomic scope" value="Eukaryota"/>
</dbReference>
<dbReference type="GeneTree" id="ENSGT00390000003878"/>
<dbReference type="HOGENOM" id="CLU_047507_0_0_1"/>
<dbReference type="InParanoid" id="Q66H56"/>
<dbReference type="OrthoDB" id="33914at9989"/>
<dbReference type="PhylomeDB" id="Q66H56"/>
<dbReference type="TreeFam" id="TF328871"/>
<dbReference type="PRO" id="PR:Q66H56"/>
<dbReference type="Proteomes" id="UP000002494">
    <property type="component" value="Chromosome 16"/>
</dbReference>
<dbReference type="Bgee" id="ENSRNOG00000023494">
    <property type="expression patterns" value="Expressed in thymus and 20 other cell types or tissues"/>
</dbReference>
<dbReference type="ExpressionAtlas" id="Q66H56">
    <property type="expression patterns" value="baseline and differential"/>
</dbReference>
<dbReference type="GO" id="GO:0110078">
    <property type="term" value="C:TTT Hsp90 cochaperone complex"/>
    <property type="evidence" value="ECO:0000266"/>
    <property type="project" value="RGD"/>
</dbReference>
<dbReference type="InterPro" id="IPR016024">
    <property type="entry name" value="ARM-type_fold"/>
</dbReference>
<dbReference type="InterPro" id="IPR018870">
    <property type="entry name" value="Tti2"/>
</dbReference>
<dbReference type="PANTHER" id="PTHR32226">
    <property type="entry name" value="TELO2-INTERACTING PROTEIN 2"/>
    <property type="match status" value="1"/>
</dbReference>
<dbReference type="PANTHER" id="PTHR32226:SF2">
    <property type="entry name" value="TELO2-INTERACTING PROTEIN 2"/>
    <property type="match status" value="1"/>
</dbReference>
<dbReference type="Pfam" id="PF10521">
    <property type="entry name" value="Tti2"/>
    <property type="match status" value="1"/>
</dbReference>
<dbReference type="SUPFAM" id="SSF48371">
    <property type="entry name" value="ARM repeat"/>
    <property type="match status" value="1"/>
</dbReference>